<feature type="initiator methionine" description="Removed" evidence="3">
    <location>
        <position position="1"/>
    </location>
</feature>
<feature type="chain" id="PRO_0000140851" description="Phospho-2-dehydro-3-deoxyheptonate aldolase, tyrosine-inhibited">
    <location>
        <begin position="2"/>
        <end position="370"/>
    </location>
</feature>
<feature type="modified residue" description="N-acetylserine" evidence="3">
    <location>
        <position position="2"/>
    </location>
</feature>
<feature type="strand" evidence="5">
    <location>
        <begin position="25"/>
        <end position="29"/>
    </location>
</feature>
<feature type="helix" evidence="5">
    <location>
        <begin position="34"/>
        <end position="40"/>
    </location>
</feature>
<feature type="helix" evidence="5">
    <location>
        <begin position="45"/>
        <end position="62"/>
    </location>
</feature>
<feature type="strand" evidence="5">
    <location>
        <begin position="68"/>
        <end position="74"/>
    </location>
</feature>
<feature type="helix" evidence="5">
    <location>
        <begin position="81"/>
        <end position="98"/>
    </location>
</feature>
<feature type="turn" evidence="5">
    <location>
        <begin position="99"/>
        <end position="101"/>
    </location>
</feature>
<feature type="strand" evidence="5">
    <location>
        <begin position="102"/>
        <end position="107"/>
    </location>
</feature>
<feature type="strand" evidence="5">
    <location>
        <begin position="115"/>
        <end position="118"/>
    </location>
</feature>
<feature type="turn" evidence="5">
    <location>
        <begin position="122"/>
        <end position="124"/>
    </location>
</feature>
<feature type="strand" evidence="5">
    <location>
        <begin position="128"/>
        <end position="130"/>
    </location>
</feature>
<feature type="helix" evidence="5">
    <location>
        <begin position="134"/>
        <end position="149"/>
    </location>
</feature>
<feature type="turn" evidence="5">
    <location>
        <begin position="150"/>
        <end position="152"/>
    </location>
</feature>
<feature type="strand" evidence="5">
    <location>
        <begin position="155"/>
        <end position="158"/>
    </location>
</feature>
<feature type="strand" evidence="5">
    <location>
        <begin position="161"/>
        <end position="163"/>
    </location>
</feature>
<feature type="helix" evidence="5">
    <location>
        <begin position="165"/>
        <end position="168"/>
    </location>
</feature>
<feature type="helix" evidence="5">
    <location>
        <begin position="169"/>
        <end position="171"/>
    </location>
</feature>
<feature type="strand" evidence="5">
    <location>
        <begin position="173"/>
        <end position="177"/>
    </location>
</feature>
<feature type="turn" evidence="5">
    <location>
        <begin position="179"/>
        <end position="183"/>
    </location>
</feature>
<feature type="helix" evidence="5">
    <location>
        <begin position="185"/>
        <end position="192"/>
    </location>
</feature>
<feature type="strand" evidence="5">
    <location>
        <begin position="198"/>
        <end position="201"/>
    </location>
</feature>
<feature type="helix" evidence="5">
    <location>
        <begin position="209"/>
        <end position="218"/>
    </location>
</feature>
<feature type="strand" evidence="5">
    <location>
        <begin position="223"/>
        <end position="227"/>
    </location>
</feature>
<feature type="strand" evidence="5">
    <location>
        <begin position="231"/>
        <end position="238"/>
    </location>
</feature>
<feature type="strand" evidence="5">
    <location>
        <begin position="244"/>
        <end position="248"/>
    </location>
</feature>
<feature type="helix" evidence="5">
    <location>
        <begin position="259"/>
        <end position="268"/>
    </location>
</feature>
<feature type="strand" evidence="5">
    <location>
        <begin position="276"/>
        <end position="281"/>
    </location>
</feature>
<feature type="helix" evidence="5">
    <location>
        <begin position="282"/>
        <end position="285"/>
    </location>
</feature>
<feature type="helix" evidence="5">
    <location>
        <begin position="289"/>
        <end position="291"/>
    </location>
</feature>
<feature type="helix" evidence="5">
    <location>
        <begin position="292"/>
        <end position="304"/>
    </location>
</feature>
<feature type="strand" evidence="5">
    <location>
        <begin position="309"/>
        <end position="317"/>
    </location>
</feature>
<feature type="strand" evidence="5">
    <location>
        <begin position="319"/>
        <end position="323"/>
    </location>
</feature>
<feature type="helix" evidence="4">
    <location>
        <begin position="330"/>
        <end position="333"/>
    </location>
</feature>
<feature type="strand" evidence="5">
    <location>
        <begin position="339"/>
        <end position="342"/>
    </location>
</feature>
<feature type="helix" evidence="5">
    <location>
        <begin position="347"/>
        <end position="367"/>
    </location>
</feature>
<evidence type="ECO:0000269" key="1">
    <source>
    </source>
</evidence>
<evidence type="ECO:0000305" key="2"/>
<evidence type="ECO:0007744" key="3">
    <source>
    </source>
</evidence>
<evidence type="ECO:0007829" key="4">
    <source>
        <dbReference type="PDB" id="1OF6"/>
    </source>
</evidence>
<evidence type="ECO:0007829" key="5">
    <source>
        <dbReference type="PDB" id="1OF8"/>
    </source>
</evidence>
<accession>P32449</accession>
<accession>D6VQP5</accession>
<name>AROG_YEAST</name>
<protein>
    <recommendedName>
        <fullName>Phospho-2-dehydro-3-deoxyheptonate aldolase, tyrosine-inhibited</fullName>
        <ecNumber>2.5.1.54</ecNumber>
    </recommendedName>
    <alternativeName>
        <fullName>3-deoxy-D-arabino-heptulosonate 7-phosphate synthase</fullName>
    </alternativeName>
    <alternativeName>
        <fullName>DAHP synthase</fullName>
    </alternativeName>
    <alternativeName>
        <fullName>Phospho-2-keto-3-deoxyheptonate aldolase</fullName>
    </alternativeName>
</protein>
<gene>
    <name type="primary">ARO4</name>
    <name type="ordered locus">YBR249C</name>
    <name type="ORF">YBR1701</name>
</gene>
<keyword id="KW-0002">3D-structure</keyword>
<keyword id="KW-0007">Acetylation</keyword>
<keyword id="KW-0028">Amino-acid biosynthesis</keyword>
<keyword id="KW-0057">Aromatic amino acid biosynthesis</keyword>
<keyword id="KW-1185">Reference proteome</keyword>
<keyword id="KW-0346">Stress response</keyword>
<keyword id="KW-0808">Transferase</keyword>
<reference key="1">
    <citation type="journal article" date="1992" name="Gene">
        <title>Cloning, primary structure and regulation of the ARO4 gene, encoding the tyrosine-inhibited 3-deoxy-D-arabino-heptulosonate-7-phosphate synthase from Saccharomyces cerevisiae.</title>
        <authorList>
            <person name="Kuenzler M."/>
            <person name="Paravicini G."/>
            <person name="Egli C."/>
            <person name="Irniger S."/>
            <person name="Braus G.H."/>
        </authorList>
    </citation>
    <scope>NUCLEOTIDE SEQUENCE [GENOMIC DNA]</scope>
</reference>
<reference key="2">
    <citation type="submission" date="1993-11" db="EMBL/GenBank/DDBJ databases">
        <authorList>
            <person name="Kuenzler M."/>
        </authorList>
    </citation>
    <scope>SEQUENCE REVISION TO 205-207</scope>
</reference>
<reference key="3">
    <citation type="journal article" date="1993" name="Yeast">
        <title>The complete sequence of a 6794 bp segment located on the right arm of chromosome II of Saccharomyces cerevisiae. Finding of a putative dUTPase in a yeast.</title>
        <authorList>
            <person name="Doignon F."/>
            <person name="Biteau N."/>
            <person name="Aigle M."/>
            <person name="Crouzet M."/>
        </authorList>
    </citation>
    <scope>NUCLEOTIDE SEQUENCE [GENOMIC DNA]</scope>
    <source>
        <strain>ATCC 204508 / S288c</strain>
    </source>
</reference>
<reference key="4">
    <citation type="journal article" date="1994" name="EMBO J.">
        <title>Complete DNA sequence of yeast chromosome II.</title>
        <authorList>
            <person name="Feldmann H."/>
            <person name="Aigle M."/>
            <person name="Aljinovic G."/>
            <person name="Andre B."/>
            <person name="Baclet M.C."/>
            <person name="Barthe C."/>
            <person name="Baur A."/>
            <person name="Becam A.-M."/>
            <person name="Biteau N."/>
            <person name="Boles E."/>
            <person name="Brandt T."/>
            <person name="Brendel M."/>
            <person name="Brueckner M."/>
            <person name="Bussereau F."/>
            <person name="Christiansen C."/>
            <person name="Contreras R."/>
            <person name="Crouzet M."/>
            <person name="Cziepluch C."/>
            <person name="Demolis N."/>
            <person name="Delaveau T."/>
            <person name="Doignon F."/>
            <person name="Domdey H."/>
            <person name="Duesterhus S."/>
            <person name="Dubois E."/>
            <person name="Dujon B."/>
            <person name="El Bakkoury M."/>
            <person name="Entian K.-D."/>
            <person name="Feuermann M."/>
            <person name="Fiers W."/>
            <person name="Fobo G.M."/>
            <person name="Fritz C."/>
            <person name="Gassenhuber J."/>
            <person name="Glansdorff N."/>
            <person name="Goffeau A."/>
            <person name="Grivell L.A."/>
            <person name="de Haan M."/>
            <person name="Hein C."/>
            <person name="Herbert C.J."/>
            <person name="Hollenberg C.P."/>
            <person name="Holmstroem K."/>
            <person name="Jacq C."/>
            <person name="Jacquet M."/>
            <person name="Jauniaux J.-C."/>
            <person name="Jonniaux J.-L."/>
            <person name="Kallesoee T."/>
            <person name="Kiesau P."/>
            <person name="Kirchrath L."/>
            <person name="Koetter P."/>
            <person name="Korol S."/>
            <person name="Liebl S."/>
            <person name="Logghe M."/>
            <person name="Lohan A.J.E."/>
            <person name="Louis E.J."/>
            <person name="Li Z.Y."/>
            <person name="Maat M.J."/>
            <person name="Mallet L."/>
            <person name="Mannhaupt G."/>
            <person name="Messenguy F."/>
            <person name="Miosga T."/>
            <person name="Molemans F."/>
            <person name="Mueller S."/>
            <person name="Nasr F."/>
            <person name="Obermaier B."/>
            <person name="Perea J."/>
            <person name="Pierard A."/>
            <person name="Piravandi E."/>
            <person name="Pohl F.M."/>
            <person name="Pohl T.M."/>
            <person name="Potier S."/>
            <person name="Proft M."/>
            <person name="Purnelle B."/>
            <person name="Ramezani Rad M."/>
            <person name="Rieger M."/>
            <person name="Rose M."/>
            <person name="Schaaff-Gerstenschlaeger I."/>
            <person name="Scherens B."/>
            <person name="Schwarzlose C."/>
            <person name="Skala J."/>
            <person name="Slonimski P.P."/>
            <person name="Smits P.H.M."/>
            <person name="Souciet J.-L."/>
            <person name="Steensma H.Y."/>
            <person name="Stucka R."/>
            <person name="Urrestarazu L.A."/>
            <person name="van der Aart Q.J.M."/>
            <person name="Van Dyck L."/>
            <person name="Vassarotti A."/>
            <person name="Vetter I."/>
            <person name="Vierendeels F."/>
            <person name="Vissers S."/>
            <person name="Wagner G."/>
            <person name="de Wergifosse P."/>
            <person name="Wolfe K.H."/>
            <person name="Zagulski M."/>
            <person name="Zimmermann F.K."/>
            <person name="Mewes H.-W."/>
            <person name="Kleine K."/>
        </authorList>
    </citation>
    <scope>NUCLEOTIDE SEQUENCE [LARGE SCALE GENOMIC DNA]</scope>
    <source>
        <strain>ATCC 204508 / S288c</strain>
    </source>
</reference>
<reference key="5">
    <citation type="journal article" date="2014" name="G3 (Bethesda)">
        <title>The reference genome sequence of Saccharomyces cerevisiae: Then and now.</title>
        <authorList>
            <person name="Engel S.R."/>
            <person name="Dietrich F.S."/>
            <person name="Fisk D.G."/>
            <person name="Binkley G."/>
            <person name="Balakrishnan R."/>
            <person name="Costanzo M.C."/>
            <person name="Dwight S.S."/>
            <person name="Hitz B.C."/>
            <person name="Karra K."/>
            <person name="Nash R.S."/>
            <person name="Weng S."/>
            <person name="Wong E.D."/>
            <person name="Lloyd P."/>
            <person name="Skrzypek M.S."/>
            <person name="Miyasato S.R."/>
            <person name="Simison M."/>
            <person name="Cherry J.M."/>
        </authorList>
    </citation>
    <scope>GENOME REANNOTATION</scope>
    <source>
        <strain>ATCC 204508 / S288c</strain>
    </source>
</reference>
<reference key="6">
    <citation type="journal article" date="1993" name="J. Bacteriol.">
        <title>Cloning, primary structure, and regulation of the HIS7 gene encoding a bifunctional glutamine amidotransferase: cyclase from Saccharomyces cerevisiae.</title>
        <authorList>
            <person name="Kuenzler M."/>
            <person name="Balmelli T."/>
            <person name="Egli C.M."/>
            <person name="Paravicini G."/>
            <person name="Braus G.H."/>
        </authorList>
    </citation>
    <scope>NUCLEOTIDE SEQUENCE [GENOMIC DNA] OF 352-370</scope>
</reference>
<reference key="7">
    <citation type="journal article" date="2003" name="Nature">
        <title>Global analysis of protein expression in yeast.</title>
        <authorList>
            <person name="Ghaemmaghami S."/>
            <person name="Huh W.-K."/>
            <person name="Bower K."/>
            <person name="Howson R.W."/>
            <person name="Belle A."/>
            <person name="Dephoure N."/>
            <person name="O'Shea E.K."/>
            <person name="Weissman J.S."/>
        </authorList>
    </citation>
    <scope>LEVEL OF PROTEIN EXPRESSION [LARGE SCALE ANALYSIS]</scope>
</reference>
<reference key="8">
    <citation type="journal article" date="2008" name="Mol. Cell. Proteomics">
        <title>A multidimensional chromatography technology for in-depth phosphoproteome analysis.</title>
        <authorList>
            <person name="Albuquerque C.P."/>
            <person name="Smolka M.B."/>
            <person name="Payne S.H."/>
            <person name="Bafna V."/>
            <person name="Eng J."/>
            <person name="Zhou H."/>
        </authorList>
    </citation>
    <scope>IDENTIFICATION BY MASS SPECTROMETRY [LARGE SCALE ANALYSIS]</scope>
</reference>
<reference key="9">
    <citation type="journal article" date="2012" name="Proc. Natl. Acad. Sci. U.S.A.">
        <title>N-terminal acetylome analyses and functional insights of the N-terminal acetyltransferase NatB.</title>
        <authorList>
            <person name="Van Damme P."/>
            <person name="Lasa M."/>
            <person name="Polevoda B."/>
            <person name="Gazquez C."/>
            <person name="Elosegui-Artola A."/>
            <person name="Kim D.S."/>
            <person name="De Juan-Pardo E."/>
            <person name="Demeyer K."/>
            <person name="Hole K."/>
            <person name="Larrea E."/>
            <person name="Timmerman E."/>
            <person name="Prieto J."/>
            <person name="Arnesen T."/>
            <person name="Sherman F."/>
            <person name="Gevaert K."/>
            <person name="Aldabe R."/>
        </authorList>
    </citation>
    <scope>ACETYLATION [LARGE SCALE ANALYSIS] AT SER-2</scope>
    <scope>CLEAVAGE OF INITIATOR METHIONINE [LARGE SCALE ANALYSIS]</scope>
    <scope>IDENTIFICATION BY MASS SPECTROMETRY [LARGE SCALE ANALYSIS]</scope>
</reference>
<reference key="10">
    <citation type="journal article" date="2003" name="Proc. Natl. Acad. Sci. U.S.A.">
        <title>Evolution of feedback-inhibited beta/alpha barrel isoenzymes by gene duplication and a single mutation.</title>
        <authorList>
            <person name="Hartmann M."/>
            <person name="Schneider T.R."/>
            <person name="Pfeil A."/>
            <person name="Heinrich G."/>
            <person name="Lipscomb W.N."/>
            <person name="Braus G.H."/>
        </authorList>
    </citation>
    <scope>X-RAY CRYSTALLOGRAPHY (1.9 ANGSTROMS) OF 23-369</scope>
</reference>
<dbReference type="EC" id="2.5.1.54"/>
<dbReference type="EMBL" id="X61107">
    <property type="protein sequence ID" value="CAA43419.1"/>
    <property type="molecule type" value="Genomic_DNA"/>
</dbReference>
<dbReference type="EMBL" id="L20296">
    <property type="protein sequence ID" value="AAA65607.1"/>
    <property type="molecule type" value="Genomic_DNA"/>
</dbReference>
<dbReference type="EMBL" id="Z36118">
    <property type="protein sequence ID" value="CAA85212.1"/>
    <property type="molecule type" value="Genomic_DNA"/>
</dbReference>
<dbReference type="EMBL" id="BK006936">
    <property type="protein sequence ID" value="DAA07365.1"/>
    <property type="molecule type" value="Genomic_DNA"/>
</dbReference>
<dbReference type="PIR" id="S38185">
    <property type="entry name" value="S38185"/>
</dbReference>
<dbReference type="RefSeq" id="NP_009808.1">
    <property type="nucleotide sequence ID" value="NM_001178597.1"/>
</dbReference>
<dbReference type="PDB" id="1HFB">
    <property type="method" value="X-ray"/>
    <property type="resolution" value="1.90 A"/>
    <property type="chains" value="A/B/C/D/E/F/G/H=1-370"/>
</dbReference>
<dbReference type="PDB" id="1OAB">
    <property type="method" value="X-ray"/>
    <property type="resolution" value="1.90 A"/>
    <property type="chains" value="A/B=1-370"/>
</dbReference>
<dbReference type="PDB" id="1OF6">
    <property type="method" value="X-ray"/>
    <property type="resolution" value="2.10 A"/>
    <property type="chains" value="A/B/C/D/E/F/G/H=1-370"/>
</dbReference>
<dbReference type="PDB" id="1OF8">
    <property type="method" value="X-ray"/>
    <property type="resolution" value="1.50 A"/>
    <property type="chains" value="A/B=1-370"/>
</dbReference>
<dbReference type="PDB" id="1OFA">
    <property type="method" value="X-ray"/>
    <property type="resolution" value="2.01 A"/>
    <property type="chains" value="A/B=1-370"/>
</dbReference>
<dbReference type="PDB" id="1OFB">
    <property type="method" value="X-ray"/>
    <property type="resolution" value="2.00 A"/>
    <property type="chains" value="A/B=1-370"/>
</dbReference>
<dbReference type="PDB" id="1OFO">
    <property type="method" value="X-ray"/>
    <property type="resolution" value="1.85 A"/>
    <property type="chains" value="A/B=1-370"/>
</dbReference>
<dbReference type="PDB" id="1OFP">
    <property type="method" value="X-ray"/>
    <property type="resolution" value="2.10 A"/>
    <property type="chains" value="A/B/C/D=1-370"/>
</dbReference>
<dbReference type="PDB" id="1OFQ">
    <property type="method" value="X-ray"/>
    <property type="resolution" value="2.70 A"/>
    <property type="chains" value="A/B/C/D=1-370"/>
</dbReference>
<dbReference type="PDB" id="1OFR">
    <property type="method" value="X-ray"/>
    <property type="resolution" value="2.70 A"/>
    <property type="chains" value="A/B/C/D/E/F/G/H=1-370"/>
</dbReference>
<dbReference type="PDB" id="1OG0">
    <property type="method" value="X-ray"/>
    <property type="resolution" value="2.70 A"/>
    <property type="chains" value="A/B/C/D/E/F/G/H=1-370"/>
</dbReference>
<dbReference type="PDBsum" id="1HFB"/>
<dbReference type="PDBsum" id="1OAB"/>
<dbReference type="PDBsum" id="1OF6"/>
<dbReference type="PDBsum" id="1OF8"/>
<dbReference type="PDBsum" id="1OFA"/>
<dbReference type="PDBsum" id="1OFB"/>
<dbReference type="PDBsum" id="1OFO"/>
<dbReference type="PDBsum" id="1OFP"/>
<dbReference type="PDBsum" id="1OFQ"/>
<dbReference type="PDBsum" id="1OFR"/>
<dbReference type="PDBsum" id="1OG0"/>
<dbReference type="SMR" id="P32449"/>
<dbReference type="BioGRID" id="32944">
    <property type="interactions" value="64"/>
</dbReference>
<dbReference type="DIP" id="DIP-4175N"/>
<dbReference type="FunCoup" id="P32449">
    <property type="interactions" value="302"/>
</dbReference>
<dbReference type="IntAct" id="P32449">
    <property type="interactions" value="11"/>
</dbReference>
<dbReference type="MINT" id="P32449"/>
<dbReference type="STRING" id="4932.YBR249C"/>
<dbReference type="iPTMnet" id="P32449"/>
<dbReference type="PaxDb" id="4932-YBR249C"/>
<dbReference type="PeptideAtlas" id="P32449"/>
<dbReference type="EnsemblFungi" id="YBR249C_mRNA">
    <property type="protein sequence ID" value="YBR249C"/>
    <property type="gene ID" value="YBR249C"/>
</dbReference>
<dbReference type="GeneID" id="852551"/>
<dbReference type="KEGG" id="sce:YBR249C"/>
<dbReference type="AGR" id="SGD:S000000453"/>
<dbReference type="SGD" id="S000000453">
    <property type="gene designation" value="ARO4"/>
</dbReference>
<dbReference type="VEuPathDB" id="FungiDB:YBR249C"/>
<dbReference type="eggNOG" id="ENOG502QPSU">
    <property type="taxonomic scope" value="Eukaryota"/>
</dbReference>
<dbReference type="GeneTree" id="ENSGT00940000176767"/>
<dbReference type="HOGENOM" id="CLU_030903_0_1_1"/>
<dbReference type="InParanoid" id="P32449"/>
<dbReference type="OMA" id="QPLVMEN"/>
<dbReference type="OrthoDB" id="4699125at2759"/>
<dbReference type="BioCyc" id="YEAST:YBR249C-MONOMER"/>
<dbReference type="BRENDA" id="2.5.1.54">
    <property type="organism ID" value="984"/>
</dbReference>
<dbReference type="UniPathway" id="UPA00053">
    <property type="reaction ID" value="UER00084"/>
</dbReference>
<dbReference type="BioGRID-ORCS" id="852551">
    <property type="hits" value="2 hits in 10 CRISPR screens"/>
</dbReference>
<dbReference type="EvolutionaryTrace" id="P32449"/>
<dbReference type="PRO" id="PR:P32449"/>
<dbReference type="Proteomes" id="UP000002311">
    <property type="component" value="Chromosome II"/>
</dbReference>
<dbReference type="RNAct" id="P32449">
    <property type="molecule type" value="protein"/>
</dbReference>
<dbReference type="GO" id="GO:0005737">
    <property type="term" value="C:cytoplasm"/>
    <property type="evidence" value="ECO:0007005"/>
    <property type="project" value="SGD"/>
</dbReference>
<dbReference type="GO" id="GO:0005634">
    <property type="term" value="C:nucleus"/>
    <property type="evidence" value="ECO:0007005"/>
    <property type="project" value="SGD"/>
</dbReference>
<dbReference type="GO" id="GO:0003849">
    <property type="term" value="F:3-deoxy-7-phosphoheptulonate synthase activity"/>
    <property type="evidence" value="ECO:0000314"/>
    <property type="project" value="SGD"/>
</dbReference>
<dbReference type="GO" id="GO:0008652">
    <property type="term" value="P:amino acid biosynthetic process"/>
    <property type="evidence" value="ECO:0007669"/>
    <property type="project" value="UniProtKB-KW"/>
</dbReference>
<dbReference type="GO" id="GO:0009073">
    <property type="term" value="P:aromatic amino acid family biosynthetic process"/>
    <property type="evidence" value="ECO:0000318"/>
    <property type="project" value="GO_Central"/>
</dbReference>
<dbReference type="GO" id="GO:0009423">
    <property type="term" value="P:chorismate biosynthetic process"/>
    <property type="evidence" value="ECO:0000304"/>
    <property type="project" value="SGD"/>
</dbReference>
<dbReference type="FunFam" id="3.20.20.70:FF:000005">
    <property type="entry name" value="Phospho-2-dehydro-3-deoxyheptonate aldolase"/>
    <property type="match status" value="1"/>
</dbReference>
<dbReference type="Gene3D" id="3.20.20.70">
    <property type="entry name" value="Aldolase class I"/>
    <property type="match status" value="1"/>
</dbReference>
<dbReference type="InterPro" id="IPR013785">
    <property type="entry name" value="Aldolase_TIM"/>
</dbReference>
<dbReference type="InterPro" id="IPR006218">
    <property type="entry name" value="DAHP1/KDSA"/>
</dbReference>
<dbReference type="InterPro" id="IPR006219">
    <property type="entry name" value="DAHP_synth_1"/>
</dbReference>
<dbReference type="NCBIfam" id="TIGR00034">
    <property type="entry name" value="aroFGH"/>
    <property type="match status" value="1"/>
</dbReference>
<dbReference type="NCBIfam" id="NF009395">
    <property type="entry name" value="PRK12755.1"/>
    <property type="match status" value="1"/>
</dbReference>
<dbReference type="PANTHER" id="PTHR21225">
    <property type="entry name" value="PHOSPHO-2-DEHYDRO-3-DEOXYHEPTONATE ALDOLASE DAHP SYNTHETASE"/>
    <property type="match status" value="1"/>
</dbReference>
<dbReference type="PANTHER" id="PTHR21225:SF12">
    <property type="entry name" value="PHOSPHO-2-DEHYDRO-3-DEOXYHEPTONATE ALDOLASE, TYROSINE-INHIBITED"/>
    <property type="match status" value="1"/>
</dbReference>
<dbReference type="Pfam" id="PF00793">
    <property type="entry name" value="DAHP_synth_1"/>
    <property type="match status" value="1"/>
</dbReference>
<dbReference type="PIRSF" id="PIRSF001361">
    <property type="entry name" value="DAHP_synthase"/>
    <property type="match status" value="1"/>
</dbReference>
<dbReference type="SUPFAM" id="SSF51569">
    <property type="entry name" value="Aldolase"/>
    <property type="match status" value="1"/>
</dbReference>
<proteinExistence type="evidence at protein level"/>
<organism>
    <name type="scientific">Saccharomyces cerevisiae (strain ATCC 204508 / S288c)</name>
    <name type="common">Baker's yeast</name>
    <dbReference type="NCBI Taxonomy" id="559292"/>
    <lineage>
        <taxon>Eukaryota</taxon>
        <taxon>Fungi</taxon>
        <taxon>Dikarya</taxon>
        <taxon>Ascomycota</taxon>
        <taxon>Saccharomycotina</taxon>
        <taxon>Saccharomycetes</taxon>
        <taxon>Saccharomycetales</taxon>
        <taxon>Saccharomycetaceae</taxon>
        <taxon>Saccharomyces</taxon>
    </lineage>
</organism>
<comment type="function">
    <text>Stereospecific condensation of phosphoenolpyruvate (PEP) and D-erythrose-4-phosphate (E4P) giving rise to 3-deoxy-D-arabino-heptulosonate-7-phosphate (DAHP).</text>
</comment>
<comment type="catalytic activity">
    <reaction>
        <text>D-erythrose 4-phosphate + phosphoenolpyruvate + H2O = 7-phospho-2-dehydro-3-deoxy-D-arabino-heptonate + phosphate</text>
        <dbReference type="Rhea" id="RHEA:14717"/>
        <dbReference type="ChEBI" id="CHEBI:15377"/>
        <dbReference type="ChEBI" id="CHEBI:16897"/>
        <dbReference type="ChEBI" id="CHEBI:43474"/>
        <dbReference type="ChEBI" id="CHEBI:58394"/>
        <dbReference type="ChEBI" id="CHEBI:58702"/>
        <dbReference type="EC" id="2.5.1.54"/>
    </reaction>
</comment>
<comment type="activity regulation">
    <text>Inhibited by tyrosine.</text>
</comment>
<comment type="pathway">
    <text>Metabolic intermediate biosynthesis; chorismate biosynthesis; chorismate from D-erythrose 4-phosphate and phosphoenolpyruvate: step 1/7.</text>
</comment>
<comment type="induction">
    <text>By amino acid starvation.</text>
</comment>
<comment type="miscellaneous">
    <text evidence="1">Present with 26300 molecules/cell in log phase SD medium.</text>
</comment>
<comment type="similarity">
    <text evidence="2">Belongs to the class-I DAHP synthase family.</text>
</comment>
<sequence>MSESPMFAANGMPKVNQGAEEDVRILGYDPLASPALLQVQIPATPTSLETAKRGRREAIDIITGKDDRVLVIVGPCSIHDLEAAQEYALRLKKLSDELKGDLSIIMRAYLEKPRTTVGWKGLINDPDVNNTFNINKGLQSARQLFVNLTNIGLPIGSEMLDTISPQYLADLVSFGAIGARTTESQLHRELASGLSFPVGFKNGTDGTLNVAVDACQAAAHSHHFMGVTKHGVAAITTTKGNEHCFVILRGGKKGTNYDAKSVAEAKAQLPAGSNGLMIDYSHGNSNKDFRNQPKVNDVVCEQIANGENAITGVMIESNINEGNQGIPAEGKAGLKYGVSITDACIGWETTEDVLRKLAAAVRQRREVNKK</sequence>